<reference key="1">
    <citation type="journal article" date="2007" name="J. Bacteriol.">
        <title>The complete genome sequence of Roseobacter denitrificans reveals a mixotrophic rather than photosynthetic metabolism.</title>
        <authorList>
            <person name="Swingley W.D."/>
            <person name="Sadekar S."/>
            <person name="Mastrian S.D."/>
            <person name="Matthies H.J."/>
            <person name="Hao J."/>
            <person name="Ramos H."/>
            <person name="Acharya C.R."/>
            <person name="Conrad A.L."/>
            <person name="Taylor H.L."/>
            <person name="Dejesa L.C."/>
            <person name="Shah M.K."/>
            <person name="O'Huallachain M.E."/>
            <person name="Lince M.T."/>
            <person name="Blankenship R.E."/>
            <person name="Beatty J.T."/>
            <person name="Touchman J.W."/>
        </authorList>
    </citation>
    <scope>NUCLEOTIDE SEQUENCE [LARGE SCALE GENOMIC DNA]</scope>
    <source>
        <strain>ATCC 33942 / OCh 114</strain>
    </source>
</reference>
<proteinExistence type="inferred from homology"/>
<dbReference type="EMBL" id="CP000362">
    <property type="protein sequence ID" value="ABG31049.1"/>
    <property type="molecule type" value="Genomic_DNA"/>
</dbReference>
<dbReference type="RefSeq" id="WP_011567669.1">
    <property type="nucleotide sequence ID" value="NZ_FOOO01000013.1"/>
</dbReference>
<dbReference type="SMR" id="Q16AE4"/>
<dbReference type="STRING" id="375451.RD1_1409"/>
<dbReference type="KEGG" id="rde:RD1_1409"/>
<dbReference type="eggNOG" id="COG0197">
    <property type="taxonomic scope" value="Bacteria"/>
</dbReference>
<dbReference type="HOGENOM" id="CLU_078858_2_1_5"/>
<dbReference type="OrthoDB" id="9802589at2"/>
<dbReference type="Proteomes" id="UP000007029">
    <property type="component" value="Chromosome"/>
</dbReference>
<dbReference type="GO" id="GO:0022625">
    <property type="term" value="C:cytosolic large ribosomal subunit"/>
    <property type="evidence" value="ECO:0007669"/>
    <property type="project" value="TreeGrafter"/>
</dbReference>
<dbReference type="GO" id="GO:0019843">
    <property type="term" value="F:rRNA binding"/>
    <property type="evidence" value="ECO:0007669"/>
    <property type="project" value="UniProtKB-UniRule"/>
</dbReference>
<dbReference type="GO" id="GO:0003735">
    <property type="term" value="F:structural constituent of ribosome"/>
    <property type="evidence" value="ECO:0007669"/>
    <property type="project" value="InterPro"/>
</dbReference>
<dbReference type="GO" id="GO:0000049">
    <property type="term" value="F:tRNA binding"/>
    <property type="evidence" value="ECO:0007669"/>
    <property type="project" value="UniProtKB-KW"/>
</dbReference>
<dbReference type="GO" id="GO:0006412">
    <property type="term" value="P:translation"/>
    <property type="evidence" value="ECO:0007669"/>
    <property type="project" value="UniProtKB-UniRule"/>
</dbReference>
<dbReference type="CDD" id="cd01433">
    <property type="entry name" value="Ribosomal_L16_L10e"/>
    <property type="match status" value="1"/>
</dbReference>
<dbReference type="FunFam" id="3.90.1170.10:FF:000001">
    <property type="entry name" value="50S ribosomal protein L16"/>
    <property type="match status" value="1"/>
</dbReference>
<dbReference type="Gene3D" id="3.90.1170.10">
    <property type="entry name" value="Ribosomal protein L10e/L16"/>
    <property type="match status" value="1"/>
</dbReference>
<dbReference type="HAMAP" id="MF_01342">
    <property type="entry name" value="Ribosomal_uL16"/>
    <property type="match status" value="1"/>
</dbReference>
<dbReference type="InterPro" id="IPR047873">
    <property type="entry name" value="Ribosomal_uL16"/>
</dbReference>
<dbReference type="InterPro" id="IPR000114">
    <property type="entry name" value="Ribosomal_uL16_bact-type"/>
</dbReference>
<dbReference type="InterPro" id="IPR020798">
    <property type="entry name" value="Ribosomal_uL16_CS"/>
</dbReference>
<dbReference type="InterPro" id="IPR016180">
    <property type="entry name" value="Ribosomal_uL16_dom"/>
</dbReference>
<dbReference type="InterPro" id="IPR036920">
    <property type="entry name" value="Ribosomal_uL16_sf"/>
</dbReference>
<dbReference type="NCBIfam" id="TIGR01164">
    <property type="entry name" value="rplP_bact"/>
    <property type="match status" value="1"/>
</dbReference>
<dbReference type="PANTHER" id="PTHR12220">
    <property type="entry name" value="50S/60S RIBOSOMAL PROTEIN L16"/>
    <property type="match status" value="1"/>
</dbReference>
<dbReference type="PANTHER" id="PTHR12220:SF13">
    <property type="entry name" value="LARGE RIBOSOMAL SUBUNIT PROTEIN UL16M"/>
    <property type="match status" value="1"/>
</dbReference>
<dbReference type="Pfam" id="PF00252">
    <property type="entry name" value="Ribosomal_L16"/>
    <property type="match status" value="1"/>
</dbReference>
<dbReference type="PRINTS" id="PR00060">
    <property type="entry name" value="RIBOSOMALL16"/>
</dbReference>
<dbReference type="SUPFAM" id="SSF54686">
    <property type="entry name" value="Ribosomal protein L16p/L10e"/>
    <property type="match status" value="1"/>
</dbReference>
<dbReference type="PROSITE" id="PS00586">
    <property type="entry name" value="RIBOSOMAL_L16_1"/>
    <property type="match status" value="1"/>
</dbReference>
<dbReference type="PROSITE" id="PS00701">
    <property type="entry name" value="RIBOSOMAL_L16_2"/>
    <property type="match status" value="1"/>
</dbReference>
<sequence length="137" mass="15584">MLQPKRTKFRKQFKGSIKGLAKGGSDLNFGTYGLKAIEPERITARQIEAARRAMTRHMKRQGRVWIRIFPDVPVTAKPIEVRMGKGKGSVDRWAAKVKPGRVMFEIDGVNDDVAREALRLAAMKLPIKTRVVVREDW</sequence>
<comment type="function">
    <text evidence="1">Binds 23S rRNA and is also seen to make contacts with the A and possibly P site tRNAs.</text>
</comment>
<comment type="subunit">
    <text evidence="1">Part of the 50S ribosomal subunit.</text>
</comment>
<comment type="similarity">
    <text evidence="1">Belongs to the universal ribosomal protein uL16 family.</text>
</comment>
<organism>
    <name type="scientific">Roseobacter denitrificans (strain ATCC 33942 / OCh 114)</name>
    <name type="common">Erythrobacter sp. (strain OCh 114)</name>
    <name type="synonym">Roseobacter denitrificans</name>
    <dbReference type="NCBI Taxonomy" id="375451"/>
    <lineage>
        <taxon>Bacteria</taxon>
        <taxon>Pseudomonadati</taxon>
        <taxon>Pseudomonadota</taxon>
        <taxon>Alphaproteobacteria</taxon>
        <taxon>Rhodobacterales</taxon>
        <taxon>Roseobacteraceae</taxon>
        <taxon>Roseobacter</taxon>
    </lineage>
</organism>
<name>RL16_ROSDO</name>
<evidence type="ECO:0000255" key="1">
    <source>
        <dbReference type="HAMAP-Rule" id="MF_01342"/>
    </source>
</evidence>
<evidence type="ECO:0000305" key="2"/>
<keyword id="KW-1185">Reference proteome</keyword>
<keyword id="KW-0687">Ribonucleoprotein</keyword>
<keyword id="KW-0689">Ribosomal protein</keyword>
<keyword id="KW-0694">RNA-binding</keyword>
<keyword id="KW-0699">rRNA-binding</keyword>
<keyword id="KW-0820">tRNA-binding</keyword>
<protein>
    <recommendedName>
        <fullName evidence="1">Large ribosomal subunit protein uL16</fullName>
    </recommendedName>
    <alternativeName>
        <fullName evidence="2">50S ribosomal protein L16</fullName>
    </alternativeName>
</protein>
<accession>Q16AE4</accession>
<gene>
    <name evidence="1" type="primary">rplP</name>
    <name type="ordered locus">RD1_1409</name>
</gene>
<feature type="chain" id="PRO_0000251667" description="Large ribosomal subunit protein uL16">
    <location>
        <begin position="1"/>
        <end position="137"/>
    </location>
</feature>